<evidence type="ECO:0000255" key="1">
    <source>
        <dbReference type="HAMAP-Rule" id="MF_00023"/>
    </source>
</evidence>
<evidence type="ECO:0000256" key="2">
    <source>
        <dbReference type="SAM" id="MobiDB-lite"/>
    </source>
</evidence>
<evidence type="ECO:0000305" key="3"/>
<protein>
    <recommendedName>
        <fullName evidence="1">SsrA-binding protein</fullName>
    </recommendedName>
    <alternativeName>
        <fullName evidence="1">Small protein B</fullName>
    </alternativeName>
</protein>
<reference key="1">
    <citation type="journal article" date="2000" name="Nucleic Acids Res.">
        <title>Complete genome sequence of the alkaliphilic bacterium Bacillus halodurans and genomic sequence comparison with Bacillus subtilis.</title>
        <authorList>
            <person name="Takami H."/>
            <person name="Nakasone K."/>
            <person name="Takaki Y."/>
            <person name="Maeno G."/>
            <person name="Sasaki R."/>
            <person name="Masui N."/>
            <person name="Fuji F."/>
            <person name="Hirama C."/>
            <person name="Nakamura Y."/>
            <person name="Ogasawara N."/>
            <person name="Kuhara S."/>
            <person name="Horikoshi K."/>
        </authorList>
    </citation>
    <scope>NUCLEOTIDE SEQUENCE [LARGE SCALE GENOMIC DNA]</scope>
    <source>
        <strain>ATCC BAA-125 / DSM 18197 / FERM 7344 / JCM 9153 / C-125</strain>
    </source>
</reference>
<organism>
    <name type="scientific">Halalkalibacterium halodurans (strain ATCC BAA-125 / DSM 18197 / FERM 7344 / JCM 9153 / C-125)</name>
    <name type="common">Bacillus halodurans</name>
    <dbReference type="NCBI Taxonomy" id="272558"/>
    <lineage>
        <taxon>Bacteria</taxon>
        <taxon>Bacillati</taxon>
        <taxon>Bacillota</taxon>
        <taxon>Bacilli</taxon>
        <taxon>Bacillales</taxon>
        <taxon>Bacillaceae</taxon>
        <taxon>Halalkalibacterium (ex Joshi et al. 2022)</taxon>
    </lineage>
</organism>
<proteinExistence type="inferred from homology"/>
<dbReference type="EMBL" id="BA000004">
    <property type="protein sequence ID" value="BAB07271.1"/>
    <property type="status" value="ALT_INIT"/>
    <property type="molecule type" value="Genomic_DNA"/>
</dbReference>
<dbReference type="PIR" id="H84093">
    <property type="entry name" value="H84093"/>
</dbReference>
<dbReference type="RefSeq" id="WP_041820891.1">
    <property type="nucleotide sequence ID" value="NC_002570.2"/>
</dbReference>
<dbReference type="SMR" id="Q9K721"/>
<dbReference type="STRING" id="272558.gene:10729465"/>
<dbReference type="GeneID" id="87599080"/>
<dbReference type="KEGG" id="bha:BH3552"/>
<dbReference type="eggNOG" id="COG0691">
    <property type="taxonomic scope" value="Bacteria"/>
</dbReference>
<dbReference type="HOGENOM" id="CLU_108953_0_0_9"/>
<dbReference type="OrthoDB" id="9805462at2"/>
<dbReference type="Proteomes" id="UP000001258">
    <property type="component" value="Chromosome"/>
</dbReference>
<dbReference type="GO" id="GO:0005829">
    <property type="term" value="C:cytosol"/>
    <property type="evidence" value="ECO:0007669"/>
    <property type="project" value="TreeGrafter"/>
</dbReference>
<dbReference type="GO" id="GO:0003723">
    <property type="term" value="F:RNA binding"/>
    <property type="evidence" value="ECO:0007669"/>
    <property type="project" value="UniProtKB-UniRule"/>
</dbReference>
<dbReference type="GO" id="GO:0070929">
    <property type="term" value="P:trans-translation"/>
    <property type="evidence" value="ECO:0007669"/>
    <property type="project" value="UniProtKB-UniRule"/>
</dbReference>
<dbReference type="CDD" id="cd09294">
    <property type="entry name" value="SmpB"/>
    <property type="match status" value="1"/>
</dbReference>
<dbReference type="Gene3D" id="2.40.280.10">
    <property type="match status" value="1"/>
</dbReference>
<dbReference type="HAMAP" id="MF_00023">
    <property type="entry name" value="SmpB"/>
    <property type="match status" value="1"/>
</dbReference>
<dbReference type="InterPro" id="IPR023620">
    <property type="entry name" value="SmpB"/>
</dbReference>
<dbReference type="InterPro" id="IPR000037">
    <property type="entry name" value="SsrA-bd_prot"/>
</dbReference>
<dbReference type="InterPro" id="IPR020081">
    <property type="entry name" value="SsrA-bd_prot_CS"/>
</dbReference>
<dbReference type="NCBIfam" id="NF003843">
    <property type="entry name" value="PRK05422.1"/>
    <property type="match status" value="1"/>
</dbReference>
<dbReference type="NCBIfam" id="TIGR00086">
    <property type="entry name" value="smpB"/>
    <property type="match status" value="1"/>
</dbReference>
<dbReference type="PANTHER" id="PTHR30308:SF2">
    <property type="entry name" value="SSRA-BINDING PROTEIN"/>
    <property type="match status" value="1"/>
</dbReference>
<dbReference type="PANTHER" id="PTHR30308">
    <property type="entry name" value="TMRNA-BINDING COMPONENT OF TRANS-TRANSLATION TAGGING COMPLEX"/>
    <property type="match status" value="1"/>
</dbReference>
<dbReference type="Pfam" id="PF01668">
    <property type="entry name" value="SmpB"/>
    <property type="match status" value="1"/>
</dbReference>
<dbReference type="SUPFAM" id="SSF74982">
    <property type="entry name" value="Small protein B (SmpB)"/>
    <property type="match status" value="1"/>
</dbReference>
<dbReference type="PROSITE" id="PS01317">
    <property type="entry name" value="SSRP"/>
    <property type="match status" value="1"/>
</dbReference>
<accession>Q9K721</accession>
<name>SSRP_HALH5</name>
<feature type="chain" id="PRO_0000102902" description="SsrA-binding protein">
    <location>
        <begin position="1"/>
        <end position="154"/>
    </location>
</feature>
<feature type="region of interest" description="Disordered" evidence="2">
    <location>
        <begin position="134"/>
        <end position="154"/>
    </location>
</feature>
<keyword id="KW-0963">Cytoplasm</keyword>
<keyword id="KW-1185">Reference proteome</keyword>
<keyword id="KW-0694">RNA-binding</keyword>
<gene>
    <name evidence="1" type="primary">smpB</name>
    <name type="ordered locus">BH3552</name>
</gene>
<sequence>MGETEGKVIAQNKKARHDYFIEETFEAGMVLQGTEIKSIRAGRANLKDSFARVSNGEVYLHNCHISEYEQGNRYNHEPTRARKLLLHKKQIDTLIGQTQQKGYTIVPLKIYIKNGFAKCLIGLGKGKKTFDKRETLRRRDAKREVERALKEKNR</sequence>
<comment type="function">
    <text evidence="1">Required for rescue of stalled ribosomes mediated by trans-translation. Binds to transfer-messenger RNA (tmRNA), required for stable association of tmRNA with ribosomes. tmRNA and SmpB together mimic tRNA shape, replacing the anticodon stem-loop with SmpB. tmRNA is encoded by the ssrA gene; the 2 termini fold to resemble tRNA(Ala) and it encodes a 'tag peptide', a short internal open reading frame. During trans-translation Ala-aminoacylated tmRNA acts like a tRNA, entering the A-site of stalled ribosomes, displacing the stalled mRNA. The ribosome then switches to translate the ORF on the tmRNA; the nascent peptide is terminated with the 'tag peptide' encoded by the tmRNA and targeted for degradation. The ribosome is freed to recommence translation, which seems to be the essential function of trans-translation.</text>
</comment>
<comment type="subcellular location">
    <subcellularLocation>
        <location evidence="1">Cytoplasm</location>
    </subcellularLocation>
    <text evidence="1">The tmRNA-SmpB complex associates with stalled 70S ribosomes.</text>
</comment>
<comment type="similarity">
    <text evidence="1">Belongs to the SmpB family.</text>
</comment>
<comment type="sequence caution" evidence="3">
    <conflict type="erroneous initiation">
        <sequence resource="EMBL-CDS" id="BAB07271"/>
    </conflict>
    <text>Extended N-terminus.</text>
</comment>